<keyword id="KW-0256">Endoplasmic reticulum</keyword>
<keyword id="KW-0472">Membrane</keyword>
<keyword id="KW-0653">Protein transport</keyword>
<keyword id="KW-1185">Reference proteome</keyword>
<keyword id="KW-0811">Translocation</keyword>
<keyword id="KW-0812">Transmembrane</keyword>
<keyword id="KW-1133">Transmembrane helix</keyword>
<keyword id="KW-0813">Transport</keyword>
<reference key="1">
    <citation type="submission" date="2001-05" db="EMBL/GenBank/DDBJ databases">
        <authorList>
            <person name="Hartmann E."/>
        </authorList>
    </citation>
    <scope>NUCLEOTIDE SEQUENCE [MRNA]</scope>
</reference>
<reference key="2">
    <citation type="submission" date="2003-03" db="EMBL/GenBank/DDBJ databases">
        <authorList>
            <consortium name="NIH - Zebrafish Gene Collection (ZGC) project"/>
        </authorList>
    </citation>
    <scope>NUCLEOTIDE SEQUENCE [LARGE SCALE MRNA]</scope>
    <source>
        <strain>AB</strain>
    </source>
</reference>
<protein>
    <recommendedName>
        <fullName>Protein transport protein Sec61 subunit alpha-like 2</fullName>
    </recommendedName>
</protein>
<name>S61A2_DANRE</name>
<sequence>MAIKFLEVIKPFCAVLPEIQKPERRIQFKEKVLWTAITLFIFLVCCQIPLFGIMSSDSADPFYWMRVIMASNRGTLMELGISPIVTSGLIMQLLAGAKIIEVGDTPKDRALFNGAQKLFGMIITIGQAVVYVMTGMYGDPSEMGAGICLLIIIQLFVAGLIVLLLDELLQKGYGLGSGISLFIATNICETIVWKAFSPTTVNTGRGTEFEGAIIALFHLLATRTDKVRALREAFYRQNLPNLMNLIATIFVFAVVIYFQGFRVDLPIKSARYRGQYNTYPIKLFYTSNIPIILQSALVSNLYVISQMLSTRFSGNFLVNLLGTWSDTSTGGPARAYPVGGLCYYLSPPESFGTVLEDPIHAIIYIIFMLGSCAFFSKTWIEVSGSSAKDVAKQLKEQQMVMRGHRETSMVHELNRYIPTAAAFGGLCIGGLSVMADFLGAIGSGTGILLAVTIIYQYFEIFVKEQSEVGSVGALLF</sequence>
<proteinExistence type="evidence at transcript level"/>
<feature type="initiator methionine" description="Removed" evidence="1">
    <location>
        <position position="1"/>
    </location>
</feature>
<feature type="chain" id="PRO_0000131798" description="Protein transport protein Sec61 subunit alpha-like 2">
    <location>
        <begin position="2"/>
        <end position="476"/>
    </location>
</feature>
<feature type="topological domain" description="Cytoplasmic" evidence="4">
    <location>
        <begin position="2"/>
        <end position="33"/>
    </location>
</feature>
<feature type="transmembrane region" description="Helical" evidence="4">
    <location>
        <begin position="34"/>
        <end position="53"/>
    </location>
</feature>
<feature type="topological domain" description="Lumenal" evidence="4">
    <location>
        <begin position="54"/>
        <end position="76"/>
    </location>
</feature>
<feature type="transmembrane region" description="Helical" evidence="4">
    <location>
        <begin position="77"/>
        <end position="96"/>
    </location>
</feature>
<feature type="topological domain" description="Cytoplasmic" evidence="4">
    <location>
        <begin position="97"/>
        <end position="117"/>
    </location>
</feature>
<feature type="transmembrane region" description="Helical" evidence="4">
    <location>
        <begin position="118"/>
        <end position="138"/>
    </location>
</feature>
<feature type="topological domain" description="Lumenal" evidence="4">
    <location>
        <begin position="139"/>
        <end position="144"/>
    </location>
</feature>
<feature type="transmembrane region" description="Helical" evidence="4">
    <location>
        <begin position="145"/>
        <end position="165"/>
    </location>
</feature>
<feature type="topological domain" description="Cytoplasmic" evidence="4">
    <location>
        <begin position="166"/>
        <end position="172"/>
    </location>
</feature>
<feature type="transmembrane region" description="Helical" evidence="4">
    <location>
        <begin position="173"/>
        <end position="193"/>
    </location>
</feature>
<feature type="topological domain" description="Lumenal" evidence="4">
    <location>
        <begin position="194"/>
        <end position="240"/>
    </location>
</feature>
<feature type="transmembrane region" description="Helical" evidence="4">
    <location>
        <begin position="241"/>
        <end position="261"/>
    </location>
</feature>
<feature type="topological domain" description="Cytoplasmic" evidence="4">
    <location>
        <begin position="262"/>
        <end position="288"/>
    </location>
</feature>
<feature type="transmembrane region" description="Helical" evidence="4">
    <location>
        <begin position="289"/>
        <end position="309"/>
    </location>
</feature>
<feature type="topological domain" description="Lumenal" evidence="4">
    <location>
        <begin position="310"/>
        <end position="354"/>
    </location>
</feature>
<feature type="transmembrane region" description="Helical" evidence="4">
    <location>
        <begin position="355"/>
        <end position="375"/>
    </location>
</feature>
<feature type="topological domain" description="Cytoplasmic" evidence="4">
    <location>
        <begin position="376"/>
        <end position="420"/>
    </location>
</feature>
<feature type="transmembrane region" description="Helical" evidence="4">
    <location>
        <begin position="421"/>
        <end position="441"/>
    </location>
</feature>
<feature type="topological domain" description="Lumenal" evidence="4">
    <location>
        <begin position="442"/>
        <end position="445"/>
    </location>
</feature>
<feature type="transmembrane region" description="Helical" evidence="4">
    <location>
        <begin position="446"/>
        <end position="462"/>
    </location>
</feature>
<feature type="topological domain" description="Cytoplasmic" evidence="4">
    <location>
        <begin position="463"/>
        <end position="476"/>
    </location>
</feature>
<feature type="sequence conflict" description="In Ref. 1; AAK61394." evidence="5" ref="1">
    <original>V</original>
    <variation>I</variation>
    <location>
        <position position="129"/>
    </location>
</feature>
<gene>
    <name type="primary">sec61al2</name>
    <name type="synonym">sec61ab</name>
    <name type="synonym">sec61b</name>
</gene>
<organism>
    <name type="scientific">Danio rerio</name>
    <name type="common">Zebrafish</name>
    <name type="synonym">Brachydanio rerio</name>
    <dbReference type="NCBI Taxonomy" id="7955"/>
    <lineage>
        <taxon>Eukaryota</taxon>
        <taxon>Metazoa</taxon>
        <taxon>Chordata</taxon>
        <taxon>Craniata</taxon>
        <taxon>Vertebrata</taxon>
        <taxon>Euteleostomi</taxon>
        <taxon>Actinopterygii</taxon>
        <taxon>Neopterygii</taxon>
        <taxon>Teleostei</taxon>
        <taxon>Ostariophysi</taxon>
        <taxon>Cypriniformes</taxon>
        <taxon>Danionidae</taxon>
        <taxon>Danioninae</taxon>
        <taxon>Danio</taxon>
    </lineage>
</organism>
<accession>Q90YL4</accession>
<accession>Q7ZUL2</accession>
<evidence type="ECO:0000250" key="1"/>
<evidence type="ECO:0000250" key="2">
    <source>
        <dbReference type="UniProtKB" id="P38377"/>
    </source>
</evidence>
<evidence type="ECO:0000250" key="3">
    <source>
        <dbReference type="UniProtKB" id="P61619"/>
    </source>
</evidence>
<evidence type="ECO:0000255" key="4"/>
<evidence type="ECO:0000305" key="5"/>
<comment type="function">
    <text evidence="3">Component of SEC61 channel-forming translocon complex that mediates transport of signal peptide-containing precursor polypeptides across the endoplasmic reticulum (ER). Forms a ribosome receptor and a gated pore in the ER membrane, both functions required for cotranslational translocation of nascent polypeptides.</text>
</comment>
<comment type="subunit">
    <text evidence="2">The SEC61 channel-forming translocon complex consists of channel-forming core components SEC61A1, SEC61B and SEC61G and different auxiliary components such as SEC62 and SEC63.</text>
</comment>
<comment type="subcellular location">
    <subcellularLocation>
        <location evidence="3">Endoplasmic reticulum membrane</location>
        <topology evidence="4">Multi-pass membrane protein</topology>
    </subcellularLocation>
</comment>
<comment type="similarity">
    <text evidence="5">Belongs to the SecY/SEC61-alpha family.</text>
</comment>
<dbReference type="EMBL" id="AY034614">
    <property type="protein sequence ID" value="AAK61394.1"/>
    <property type="molecule type" value="mRNA"/>
</dbReference>
<dbReference type="EMBL" id="BC048881">
    <property type="protein sequence ID" value="AAH48881.1"/>
    <property type="molecule type" value="mRNA"/>
</dbReference>
<dbReference type="RefSeq" id="NP_963871.1">
    <property type="nucleotide sequence ID" value="NM_201577.1"/>
</dbReference>
<dbReference type="SMR" id="Q90YL4"/>
<dbReference type="FunCoup" id="Q90YL4">
    <property type="interactions" value="1713"/>
</dbReference>
<dbReference type="STRING" id="7955.ENSDARP00000049424"/>
<dbReference type="PaxDb" id="7955-ENSDARP00000049424"/>
<dbReference type="GeneID" id="266796"/>
<dbReference type="KEGG" id="dre:266796"/>
<dbReference type="AGR" id="ZFIN:ZDB-GENE-021016-2"/>
<dbReference type="CTD" id="266796"/>
<dbReference type="ZFIN" id="ZDB-GENE-021016-2">
    <property type="gene designation" value="sec61a1b"/>
</dbReference>
<dbReference type="eggNOG" id="KOG1373">
    <property type="taxonomic scope" value="Eukaryota"/>
</dbReference>
<dbReference type="InParanoid" id="Q90YL4"/>
<dbReference type="OrthoDB" id="420669at2759"/>
<dbReference type="PhylomeDB" id="Q90YL4"/>
<dbReference type="TreeFam" id="TF300348"/>
<dbReference type="PRO" id="PR:Q90YL4"/>
<dbReference type="Proteomes" id="UP000000437">
    <property type="component" value="Chromosome 6"/>
</dbReference>
<dbReference type="GO" id="GO:0005784">
    <property type="term" value="C:Sec61 translocon complex"/>
    <property type="evidence" value="ECO:0000318"/>
    <property type="project" value="GO_Central"/>
</dbReference>
<dbReference type="GO" id="GO:0008320">
    <property type="term" value="F:protein transmembrane transporter activity"/>
    <property type="evidence" value="ECO:0000318"/>
    <property type="project" value="GO_Central"/>
</dbReference>
<dbReference type="GO" id="GO:0043022">
    <property type="term" value="F:ribosome binding"/>
    <property type="evidence" value="ECO:0000318"/>
    <property type="project" value="GO_Central"/>
</dbReference>
<dbReference type="GO" id="GO:0005048">
    <property type="term" value="F:signal sequence binding"/>
    <property type="evidence" value="ECO:0000318"/>
    <property type="project" value="GO_Central"/>
</dbReference>
<dbReference type="GO" id="GO:0031204">
    <property type="term" value="P:post-translational protein targeting to membrane, translocation"/>
    <property type="evidence" value="ECO:0000318"/>
    <property type="project" value="GO_Central"/>
</dbReference>
<dbReference type="GO" id="GO:0048793">
    <property type="term" value="P:pronephros development"/>
    <property type="evidence" value="ECO:0000315"/>
    <property type="project" value="ZFIN"/>
</dbReference>
<dbReference type="GO" id="GO:0006616">
    <property type="term" value="P:SRP-dependent cotranslational protein targeting to membrane, translocation"/>
    <property type="evidence" value="ECO:0000318"/>
    <property type="project" value="GO_Central"/>
</dbReference>
<dbReference type="FunFam" id="1.10.3370.10:FF:000002">
    <property type="entry name" value="Transport Sec61 subunit alpha isoform 2"/>
    <property type="match status" value="1"/>
</dbReference>
<dbReference type="Gene3D" id="1.10.3370.10">
    <property type="entry name" value="SecY subunit domain"/>
    <property type="match status" value="1"/>
</dbReference>
<dbReference type="InterPro" id="IPR002208">
    <property type="entry name" value="SecY/SEC61-alpha"/>
</dbReference>
<dbReference type="InterPro" id="IPR030659">
    <property type="entry name" value="SecY_CS"/>
</dbReference>
<dbReference type="InterPro" id="IPR023201">
    <property type="entry name" value="SecY_dom_sf"/>
</dbReference>
<dbReference type="InterPro" id="IPR019561">
    <property type="entry name" value="Translocon_Sec61/SecY_plug_dom"/>
</dbReference>
<dbReference type="NCBIfam" id="TIGR00967">
    <property type="entry name" value="3a0501s007"/>
    <property type="match status" value="1"/>
</dbReference>
<dbReference type="NCBIfam" id="NF006341">
    <property type="entry name" value="PRK08568.1-5"/>
    <property type="match status" value="1"/>
</dbReference>
<dbReference type="PANTHER" id="PTHR10906">
    <property type="entry name" value="SECY/SEC61-ALPHA FAMILY MEMBER"/>
    <property type="match status" value="1"/>
</dbReference>
<dbReference type="Pfam" id="PF10559">
    <property type="entry name" value="Plug_translocon"/>
    <property type="match status" value="1"/>
</dbReference>
<dbReference type="Pfam" id="PF00344">
    <property type="entry name" value="SecY"/>
    <property type="match status" value="1"/>
</dbReference>
<dbReference type="PIRSF" id="PIRSF004557">
    <property type="entry name" value="SecY"/>
    <property type="match status" value="1"/>
</dbReference>
<dbReference type="SUPFAM" id="SSF103491">
    <property type="entry name" value="Preprotein translocase SecY subunit"/>
    <property type="match status" value="1"/>
</dbReference>
<dbReference type="PROSITE" id="PS00755">
    <property type="entry name" value="SECY_1"/>
    <property type="match status" value="1"/>
</dbReference>
<dbReference type="PROSITE" id="PS00756">
    <property type="entry name" value="SECY_2"/>
    <property type="match status" value="1"/>
</dbReference>